<name>ENTS_ECOSE</name>
<gene>
    <name evidence="1" type="primary">entS</name>
    <name type="ordered locus">ECSE_0658</name>
</gene>
<dbReference type="EMBL" id="AP009240">
    <property type="protein sequence ID" value="BAG76182.1"/>
    <property type="molecule type" value="Genomic_DNA"/>
</dbReference>
<dbReference type="RefSeq" id="WP_001041789.1">
    <property type="nucleotide sequence ID" value="NC_011415.1"/>
</dbReference>
<dbReference type="SMR" id="B6I0P3"/>
<dbReference type="GeneID" id="93776895"/>
<dbReference type="KEGG" id="ecy:ECSE_0658"/>
<dbReference type="HOGENOM" id="CLU_034180_11_0_6"/>
<dbReference type="Proteomes" id="UP000008199">
    <property type="component" value="Chromosome"/>
</dbReference>
<dbReference type="GO" id="GO:0005886">
    <property type="term" value="C:plasma membrane"/>
    <property type="evidence" value="ECO:0007669"/>
    <property type="project" value="UniProtKB-SubCell"/>
</dbReference>
<dbReference type="GO" id="GO:0042931">
    <property type="term" value="F:enterobactin transmembrane transporter activity"/>
    <property type="evidence" value="ECO:0007669"/>
    <property type="project" value="InterPro"/>
</dbReference>
<dbReference type="CDD" id="cd06173">
    <property type="entry name" value="MFS_MefA_like"/>
    <property type="match status" value="1"/>
</dbReference>
<dbReference type="FunFam" id="1.20.1250.20:FF:000056">
    <property type="entry name" value="Enterobactin exporter EntS"/>
    <property type="match status" value="1"/>
</dbReference>
<dbReference type="Gene3D" id="1.20.1250.20">
    <property type="entry name" value="MFS general substrate transporter like domains"/>
    <property type="match status" value="1"/>
</dbReference>
<dbReference type="HAMAP" id="MF_01436">
    <property type="entry name" value="MFS_EntS"/>
    <property type="match status" value="1"/>
</dbReference>
<dbReference type="InterPro" id="IPR023722">
    <property type="entry name" value="Enterobactin_exp_EntS"/>
</dbReference>
<dbReference type="InterPro" id="IPR020846">
    <property type="entry name" value="MFS_dom"/>
</dbReference>
<dbReference type="InterPro" id="IPR036259">
    <property type="entry name" value="MFS_trans_sf"/>
</dbReference>
<dbReference type="InterPro" id="IPR010290">
    <property type="entry name" value="TM_effector"/>
</dbReference>
<dbReference type="NCBIfam" id="NF007792">
    <property type="entry name" value="PRK10489.1"/>
    <property type="match status" value="1"/>
</dbReference>
<dbReference type="PANTHER" id="PTHR23513:SF9">
    <property type="entry name" value="ENTEROBACTIN EXPORTER ENTS"/>
    <property type="match status" value="1"/>
</dbReference>
<dbReference type="PANTHER" id="PTHR23513">
    <property type="entry name" value="INTEGRAL MEMBRANE EFFLUX PROTEIN-RELATED"/>
    <property type="match status" value="1"/>
</dbReference>
<dbReference type="Pfam" id="PF05977">
    <property type="entry name" value="MFS_3"/>
    <property type="match status" value="1"/>
</dbReference>
<dbReference type="SUPFAM" id="SSF103473">
    <property type="entry name" value="MFS general substrate transporter"/>
    <property type="match status" value="1"/>
</dbReference>
<dbReference type="PROSITE" id="PS50850">
    <property type="entry name" value="MFS"/>
    <property type="match status" value="1"/>
</dbReference>
<proteinExistence type="inferred from homology"/>
<feature type="chain" id="PRO_1000145847" description="Enterobactin exporter EntS">
    <location>
        <begin position="1"/>
        <end position="416"/>
    </location>
</feature>
<feature type="topological domain" description="Cytoplasmic" evidence="1">
    <location>
        <begin position="1"/>
        <end position="21"/>
    </location>
</feature>
<feature type="transmembrane region" description="Helical" evidence="1">
    <location>
        <begin position="22"/>
        <end position="42"/>
    </location>
</feature>
<feature type="topological domain" description="Periplasmic" evidence="1">
    <location>
        <begin position="43"/>
        <end position="55"/>
    </location>
</feature>
<feature type="transmembrane region" description="Helical" evidence="1">
    <location>
        <begin position="56"/>
        <end position="76"/>
    </location>
</feature>
<feature type="topological domain" description="Cytoplasmic" evidence="1">
    <location>
        <begin position="77"/>
        <end position="83"/>
    </location>
</feature>
<feature type="transmembrane region" description="Helical" evidence="1">
    <location>
        <begin position="84"/>
        <end position="104"/>
    </location>
</feature>
<feature type="topological domain" description="Periplasmic" evidence="1">
    <location>
        <begin position="105"/>
        <end position="109"/>
    </location>
</feature>
<feature type="transmembrane region" description="Helical" evidence="1">
    <location>
        <begin position="110"/>
        <end position="130"/>
    </location>
</feature>
<feature type="topological domain" description="Cytoplasmic" evidence="1">
    <location>
        <begin position="131"/>
        <end position="156"/>
    </location>
</feature>
<feature type="transmembrane region" description="Helical" evidence="1">
    <location>
        <begin position="157"/>
        <end position="177"/>
    </location>
</feature>
<feature type="topological domain" description="Periplasmic" evidence="1">
    <location>
        <position position="178"/>
    </location>
</feature>
<feature type="transmembrane region" description="Helical" evidence="1">
    <location>
        <begin position="179"/>
        <end position="199"/>
    </location>
</feature>
<feature type="topological domain" description="Cytoplasmic" evidence="1">
    <location>
        <begin position="200"/>
        <end position="218"/>
    </location>
</feature>
<feature type="transmembrane region" description="Helical" evidence="1">
    <location>
        <begin position="219"/>
        <end position="239"/>
    </location>
</feature>
<feature type="topological domain" description="Periplasmic" evidence="1">
    <location>
        <begin position="240"/>
        <end position="256"/>
    </location>
</feature>
<feature type="transmembrane region" description="Helical" evidence="1">
    <location>
        <begin position="257"/>
        <end position="277"/>
    </location>
</feature>
<feature type="topological domain" description="Cytoplasmic" evidence="1">
    <location>
        <begin position="278"/>
        <end position="287"/>
    </location>
</feature>
<feature type="transmembrane region" description="Helical" evidence="1">
    <location>
        <begin position="288"/>
        <end position="307"/>
    </location>
</feature>
<feature type="topological domain" description="Periplasmic" evidence="1">
    <location>
        <begin position="308"/>
        <end position="313"/>
    </location>
</feature>
<feature type="transmembrane region" description="Helical" evidence="1">
    <location>
        <begin position="314"/>
        <end position="336"/>
    </location>
</feature>
<feature type="topological domain" description="Cytoplasmic" evidence="1">
    <location>
        <begin position="337"/>
        <end position="356"/>
    </location>
</feature>
<feature type="transmembrane region" description="Helical" evidence="1">
    <location>
        <begin position="357"/>
        <end position="377"/>
    </location>
</feature>
<feature type="topological domain" description="Periplasmic" evidence="1">
    <location>
        <position position="378"/>
    </location>
</feature>
<feature type="transmembrane region" description="Helical" evidence="1">
    <location>
        <begin position="379"/>
        <end position="399"/>
    </location>
</feature>
<feature type="topological domain" description="Cytoplasmic" evidence="1">
    <location>
        <begin position="400"/>
        <end position="416"/>
    </location>
</feature>
<comment type="function">
    <text evidence="1">Component of an export pathway for enterobactin.</text>
</comment>
<comment type="subcellular location">
    <subcellularLocation>
        <location evidence="1">Cell inner membrane</location>
        <topology evidence="1">Multi-pass membrane protein</topology>
    </subcellularLocation>
</comment>
<comment type="similarity">
    <text evidence="1">Belongs to the major facilitator superfamily. EntS (TC 2.A.1.38) family.</text>
</comment>
<protein>
    <recommendedName>
        <fullName evidence="1">Enterobactin exporter EntS</fullName>
    </recommendedName>
</protein>
<sequence>MNKQSWLLNLSLLKTHPAFRAVFLARFISIVSLGLLGVAVPVQIQMMTHSTWQVGLSVTLTGGAMFVGLMVGGVLADRYERKKVILLARGTCGIGFIGLCLNALLPEPSLLAIYLLGLWDGFFASLGVTALLAATPALVGRENLMQAGAITMLTVRLGSVISPMIGGLLLATGGVAWNYGLAAAGTFITLLPLLSLPALPPPPQPREHPLKSLLAGFRFLLASPLVGGIALLGGLLTMASAVRVLYPALADNWQMSAAQIGFLYAAIPLGAAIGALTSGKLAHSARPGLLMLLSTLGSFLAIGLFGLMPMWILGVVCLALFGWLSAVSSLLQYTMLQTQTPEAMLGRINGLWTAQNVTGDAIGAALLGGLGAMMTPVASASASGFGLLIIGVLLLLVLVELRRFRQTPPQVTASDS</sequence>
<reference key="1">
    <citation type="journal article" date="2008" name="DNA Res.">
        <title>Complete genome sequence and comparative analysis of the wild-type commensal Escherichia coli strain SE11 isolated from a healthy adult.</title>
        <authorList>
            <person name="Oshima K."/>
            <person name="Toh H."/>
            <person name="Ogura Y."/>
            <person name="Sasamoto H."/>
            <person name="Morita H."/>
            <person name="Park S.-H."/>
            <person name="Ooka T."/>
            <person name="Iyoda S."/>
            <person name="Taylor T.D."/>
            <person name="Hayashi T."/>
            <person name="Itoh K."/>
            <person name="Hattori M."/>
        </authorList>
    </citation>
    <scope>NUCLEOTIDE SEQUENCE [LARGE SCALE GENOMIC DNA]</scope>
    <source>
        <strain>SE11</strain>
    </source>
</reference>
<organism>
    <name type="scientific">Escherichia coli (strain SE11)</name>
    <dbReference type="NCBI Taxonomy" id="409438"/>
    <lineage>
        <taxon>Bacteria</taxon>
        <taxon>Pseudomonadati</taxon>
        <taxon>Pseudomonadota</taxon>
        <taxon>Gammaproteobacteria</taxon>
        <taxon>Enterobacterales</taxon>
        <taxon>Enterobacteriaceae</taxon>
        <taxon>Escherichia</taxon>
    </lineage>
</organism>
<keyword id="KW-0997">Cell inner membrane</keyword>
<keyword id="KW-1003">Cell membrane</keyword>
<keyword id="KW-0472">Membrane</keyword>
<keyword id="KW-0812">Transmembrane</keyword>
<keyword id="KW-1133">Transmembrane helix</keyword>
<keyword id="KW-0813">Transport</keyword>
<evidence type="ECO:0000255" key="1">
    <source>
        <dbReference type="HAMAP-Rule" id="MF_01436"/>
    </source>
</evidence>
<accession>B6I0P3</accession>